<organism>
    <name type="scientific">Vibrio vulnificus (strain YJ016)</name>
    <dbReference type="NCBI Taxonomy" id="196600"/>
    <lineage>
        <taxon>Bacteria</taxon>
        <taxon>Pseudomonadati</taxon>
        <taxon>Pseudomonadota</taxon>
        <taxon>Gammaproteobacteria</taxon>
        <taxon>Vibrionales</taxon>
        <taxon>Vibrionaceae</taxon>
        <taxon>Vibrio</taxon>
    </lineage>
</organism>
<keyword id="KW-0028">Amino-acid biosynthesis</keyword>
<keyword id="KW-0057">Aromatic amino acid biosynthesis</keyword>
<keyword id="KW-0456">Lyase</keyword>
<keyword id="KW-0663">Pyridoxal phosphate</keyword>
<keyword id="KW-0822">Tryptophan biosynthesis</keyword>
<feature type="chain" id="PRO_0000099022" description="Tryptophan synthase beta chain">
    <location>
        <begin position="1"/>
        <end position="396"/>
    </location>
</feature>
<feature type="modified residue" description="N6-(pyridoxal phosphate)lysine" evidence="1">
    <location>
        <position position="86"/>
    </location>
</feature>
<reference key="1">
    <citation type="journal article" date="2003" name="Genome Res.">
        <title>Comparative genome analysis of Vibrio vulnificus, a marine pathogen.</title>
        <authorList>
            <person name="Chen C.-Y."/>
            <person name="Wu K.-M."/>
            <person name="Chang Y.-C."/>
            <person name="Chang C.-H."/>
            <person name="Tsai H.-C."/>
            <person name="Liao T.-L."/>
            <person name="Liu Y.-M."/>
            <person name="Chen H.-J."/>
            <person name="Shen A.B.-T."/>
            <person name="Li J.-C."/>
            <person name="Su T.-L."/>
            <person name="Shao C.-P."/>
            <person name="Lee C.-T."/>
            <person name="Hor L.-I."/>
            <person name="Tsai S.-F."/>
        </authorList>
    </citation>
    <scope>NUCLEOTIDE SEQUENCE [LARGE SCALE GENOMIC DNA]</scope>
    <source>
        <strain>YJ016</strain>
    </source>
</reference>
<protein>
    <recommendedName>
        <fullName evidence="1">Tryptophan synthase beta chain</fullName>
        <ecNumber evidence="1">4.2.1.20</ecNumber>
    </recommendedName>
</protein>
<comment type="function">
    <text evidence="1">The beta subunit is responsible for the synthesis of L-tryptophan from indole and L-serine.</text>
</comment>
<comment type="catalytic activity">
    <reaction evidence="1">
        <text>(1S,2R)-1-C-(indol-3-yl)glycerol 3-phosphate + L-serine = D-glyceraldehyde 3-phosphate + L-tryptophan + H2O</text>
        <dbReference type="Rhea" id="RHEA:10532"/>
        <dbReference type="ChEBI" id="CHEBI:15377"/>
        <dbReference type="ChEBI" id="CHEBI:33384"/>
        <dbReference type="ChEBI" id="CHEBI:57912"/>
        <dbReference type="ChEBI" id="CHEBI:58866"/>
        <dbReference type="ChEBI" id="CHEBI:59776"/>
        <dbReference type="EC" id="4.2.1.20"/>
    </reaction>
</comment>
<comment type="cofactor">
    <cofactor evidence="1">
        <name>pyridoxal 5'-phosphate</name>
        <dbReference type="ChEBI" id="CHEBI:597326"/>
    </cofactor>
</comment>
<comment type="pathway">
    <text evidence="1">Amino-acid biosynthesis; L-tryptophan biosynthesis; L-tryptophan from chorismate: step 5/5.</text>
</comment>
<comment type="subunit">
    <text evidence="1">Tetramer of two alpha and two beta chains.</text>
</comment>
<comment type="similarity">
    <text evidence="1">Belongs to the TrpB family.</text>
</comment>
<evidence type="ECO:0000255" key="1">
    <source>
        <dbReference type="HAMAP-Rule" id="MF_00133"/>
    </source>
</evidence>
<accession>Q7MM56</accession>
<dbReference type="EC" id="4.2.1.20" evidence="1"/>
<dbReference type="EMBL" id="BA000037">
    <property type="protein sequence ID" value="BAC93981.1"/>
    <property type="molecule type" value="Genomic_DNA"/>
</dbReference>
<dbReference type="RefSeq" id="WP_011080871.1">
    <property type="nucleotide sequence ID" value="NC_005139.1"/>
</dbReference>
<dbReference type="SMR" id="Q7MM56"/>
<dbReference type="STRING" id="672.VV93_v1c11350"/>
<dbReference type="GeneID" id="93894277"/>
<dbReference type="KEGG" id="vvy:VV1217"/>
<dbReference type="eggNOG" id="COG0133">
    <property type="taxonomic scope" value="Bacteria"/>
</dbReference>
<dbReference type="HOGENOM" id="CLU_016734_3_1_6"/>
<dbReference type="UniPathway" id="UPA00035">
    <property type="reaction ID" value="UER00044"/>
</dbReference>
<dbReference type="Proteomes" id="UP000002675">
    <property type="component" value="Chromosome I"/>
</dbReference>
<dbReference type="GO" id="GO:0005737">
    <property type="term" value="C:cytoplasm"/>
    <property type="evidence" value="ECO:0007669"/>
    <property type="project" value="TreeGrafter"/>
</dbReference>
<dbReference type="GO" id="GO:0004834">
    <property type="term" value="F:tryptophan synthase activity"/>
    <property type="evidence" value="ECO:0007669"/>
    <property type="project" value="UniProtKB-UniRule"/>
</dbReference>
<dbReference type="CDD" id="cd06446">
    <property type="entry name" value="Trp-synth_B"/>
    <property type="match status" value="1"/>
</dbReference>
<dbReference type="FunFam" id="3.40.50.1100:FF:000001">
    <property type="entry name" value="Tryptophan synthase beta chain"/>
    <property type="match status" value="1"/>
</dbReference>
<dbReference type="FunFam" id="3.40.50.1100:FF:000004">
    <property type="entry name" value="Tryptophan synthase beta chain"/>
    <property type="match status" value="1"/>
</dbReference>
<dbReference type="Gene3D" id="3.40.50.1100">
    <property type="match status" value="2"/>
</dbReference>
<dbReference type="HAMAP" id="MF_00133">
    <property type="entry name" value="Trp_synth_beta"/>
    <property type="match status" value="1"/>
</dbReference>
<dbReference type="InterPro" id="IPR006653">
    <property type="entry name" value="Trp_synth_b_CS"/>
</dbReference>
<dbReference type="InterPro" id="IPR006654">
    <property type="entry name" value="Trp_synth_beta"/>
</dbReference>
<dbReference type="InterPro" id="IPR023026">
    <property type="entry name" value="Trp_synth_beta/beta-like"/>
</dbReference>
<dbReference type="InterPro" id="IPR001926">
    <property type="entry name" value="TrpB-like_PALP"/>
</dbReference>
<dbReference type="InterPro" id="IPR036052">
    <property type="entry name" value="TrpB-like_PALP_sf"/>
</dbReference>
<dbReference type="NCBIfam" id="TIGR00263">
    <property type="entry name" value="trpB"/>
    <property type="match status" value="1"/>
</dbReference>
<dbReference type="PANTHER" id="PTHR48077:SF3">
    <property type="entry name" value="TRYPTOPHAN SYNTHASE"/>
    <property type="match status" value="1"/>
</dbReference>
<dbReference type="PANTHER" id="PTHR48077">
    <property type="entry name" value="TRYPTOPHAN SYNTHASE-RELATED"/>
    <property type="match status" value="1"/>
</dbReference>
<dbReference type="Pfam" id="PF00291">
    <property type="entry name" value="PALP"/>
    <property type="match status" value="1"/>
</dbReference>
<dbReference type="PIRSF" id="PIRSF001413">
    <property type="entry name" value="Trp_syn_beta"/>
    <property type="match status" value="1"/>
</dbReference>
<dbReference type="SUPFAM" id="SSF53686">
    <property type="entry name" value="Tryptophan synthase beta subunit-like PLP-dependent enzymes"/>
    <property type="match status" value="1"/>
</dbReference>
<dbReference type="PROSITE" id="PS00168">
    <property type="entry name" value="TRP_SYNTHASE_BETA"/>
    <property type="match status" value="1"/>
</dbReference>
<sequence length="396" mass="42850">MTKLNAYFGEYGGQYVPQILVPALEQLEQAFIDAQEDPDFRSEFMGLLQEYAGRPTALTLTRNLTKGTKTKLYLKREDLLHGGAHKTNQVLGQALLAKRMGKNEIIAETGAGQHGVATALACALLGLKCRVYMGAKDVERQSPNVFRMKLMGATVIPVHSGSATLKDACNEALRDWSGSYETAHYLLGTAAGPHPFPTIVREFQRMIGEETKNQILAREGRLPDAVIACVGGGSNAIGMFADFIEEETVRLIGVEPAGKGIDTDQHGAPLKHGKTGIFFGMKAPLMQDENGQVEESYSVSAGLDFPSVGPQHAHLNAIGRAEYDSITDDEALDAFQELARSEGIIPALESSHALAHALKMARNNPEKEQLLVVNLSGRGDKDIFTVHAILEEKGAI</sequence>
<name>TRPB_VIBVY</name>
<proteinExistence type="inferred from homology"/>
<gene>
    <name evidence="1" type="primary">trpB</name>
    <name type="ordered locus">VV1217</name>
</gene>